<evidence type="ECO:0000255" key="1">
    <source>
        <dbReference type="HAMAP-Rule" id="MF_00787"/>
    </source>
</evidence>
<gene>
    <name evidence="1" type="primary">cbiD</name>
    <name type="ordered locus">Amet_0070</name>
</gene>
<proteinExistence type="inferred from homology"/>
<accession>A6TJE5</accession>
<protein>
    <recommendedName>
        <fullName evidence="1">Cobalt-precorrin-5B C(1)-methyltransferase</fullName>
        <ecNumber evidence="1">2.1.1.195</ecNumber>
    </recommendedName>
    <alternativeName>
        <fullName evidence="1">Cobalt-precorrin-6A synthase</fullName>
    </alternativeName>
</protein>
<keyword id="KW-0169">Cobalamin biosynthesis</keyword>
<keyword id="KW-0489">Methyltransferase</keyword>
<keyword id="KW-1185">Reference proteome</keyword>
<keyword id="KW-0949">S-adenosyl-L-methionine</keyword>
<keyword id="KW-0808">Transferase</keyword>
<dbReference type="EC" id="2.1.1.195" evidence="1"/>
<dbReference type="EMBL" id="CP000724">
    <property type="protein sequence ID" value="ABR46313.1"/>
    <property type="molecule type" value="Genomic_DNA"/>
</dbReference>
<dbReference type="RefSeq" id="WP_011971222.1">
    <property type="nucleotide sequence ID" value="NC_009633.1"/>
</dbReference>
<dbReference type="SMR" id="A6TJE5"/>
<dbReference type="STRING" id="293826.Amet_0070"/>
<dbReference type="KEGG" id="amt:Amet_0070"/>
<dbReference type="eggNOG" id="COG1903">
    <property type="taxonomic scope" value="Bacteria"/>
</dbReference>
<dbReference type="HOGENOM" id="CLU_041273_1_0_9"/>
<dbReference type="OrthoDB" id="6439987at2"/>
<dbReference type="UniPathway" id="UPA00148">
    <property type="reaction ID" value="UER00227"/>
</dbReference>
<dbReference type="Proteomes" id="UP000001572">
    <property type="component" value="Chromosome"/>
</dbReference>
<dbReference type="GO" id="GO:0043780">
    <property type="term" value="F:cobalt-precorrin-5B C1-methyltransferase activity"/>
    <property type="evidence" value="ECO:0007669"/>
    <property type="project" value="RHEA"/>
</dbReference>
<dbReference type="GO" id="GO:0019251">
    <property type="term" value="P:anaerobic cobalamin biosynthetic process"/>
    <property type="evidence" value="ECO:0007669"/>
    <property type="project" value="UniProtKB-UniRule"/>
</dbReference>
<dbReference type="GO" id="GO:0032259">
    <property type="term" value="P:methylation"/>
    <property type="evidence" value="ECO:0007669"/>
    <property type="project" value="UniProtKB-KW"/>
</dbReference>
<dbReference type="Gene3D" id="3.30.2110.10">
    <property type="entry name" value="CbiD-like"/>
    <property type="match status" value="1"/>
</dbReference>
<dbReference type="HAMAP" id="MF_00787">
    <property type="entry name" value="CbiD"/>
    <property type="match status" value="1"/>
</dbReference>
<dbReference type="InterPro" id="IPR002748">
    <property type="entry name" value="CbiD"/>
</dbReference>
<dbReference type="InterPro" id="IPR036074">
    <property type="entry name" value="CbiD_sf"/>
</dbReference>
<dbReference type="NCBIfam" id="TIGR00312">
    <property type="entry name" value="cbiD"/>
    <property type="match status" value="1"/>
</dbReference>
<dbReference type="PANTHER" id="PTHR35863">
    <property type="entry name" value="COBALT-PRECORRIN-5B C(1)-METHYLTRANSFERASE"/>
    <property type="match status" value="1"/>
</dbReference>
<dbReference type="PANTHER" id="PTHR35863:SF1">
    <property type="entry name" value="COBALT-PRECORRIN-5B C(1)-METHYLTRANSFERASE"/>
    <property type="match status" value="1"/>
</dbReference>
<dbReference type="Pfam" id="PF01888">
    <property type="entry name" value="CbiD"/>
    <property type="match status" value="1"/>
</dbReference>
<dbReference type="PIRSF" id="PIRSF026782">
    <property type="entry name" value="CbiD"/>
    <property type="match status" value="1"/>
</dbReference>
<dbReference type="SUPFAM" id="SSF111342">
    <property type="entry name" value="CbiD-like"/>
    <property type="match status" value="1"/>
</dbReference>
<comment type="function">
    <text evidence="1">Catalyzes the methylation of C-1 in cobalt-precorrin-5B to form cobalt-precorrin-6A.</text>
</comment>
<comment type="catalytic activity">
    <reaction evidence="1">
        <text>Co-precorrin-5B + S-adenosyl-L-methionine = Co-precorrin-6A + S-adenosyl-L-homocysteine</text>
        <dbReference type="Rhea" id="RHEA:26285"/>
        <dbReference type="ChEBI" id="CHEBI:57856"/>
        <dbReference type="ChEBI" id="CHEBI:59789"/>
        <dbReference type="ChEBI" id="CHEBI:60063"/>
        <dbReference type="ChEBI" id="CHEBI:60064"/>
        <dbReference type="EC" id="2.1.1.195"/>
    </reaction>
</comment>
<comment type="pathway">
    <text evidence="1">Cofactor biosynthesis; adenosylcobalamin biosynthesis; cob(II)yrinate a,c-diamide from sirohydrochlorin (anaerobic route): step 6/10.</text>
</comment>
<comment type="similarity">
    <text evidence="1">Belongs to the CbiD family.</text>
</comment>
<name>CBID_ALKMQ</name>
<organism>
    <name type="scientific">Alkaliphilus metalliredigens (strain QYMF)</name>
    <dbReference type="NCBI Taxonomy" id="293826"/>
    <lineage>
        <taxon>Bacteria</taxon>
        <taxon>Bacillati</taxon>
        <taxon>Bacillota</taxon>
        <taxon>Clostridia</taxon>
        <taxon>Peptostreptococcales</taxon>
        <taxon>Natronincolaceae</taxon>
        <taxon>Alkaliphilus</taxon>
    </lineage>
</organism>
<reference key="1">
    <citation type="journal article" date="2016" name="Genome Announc.">
        <title>Complete genome sequence of Alkaliphilus metalliredigens strain QYMF, an alkaliphilic and metal-reducing bacterium isolated from borax-contaminated leachate ponds.</title>
        <authorList>
            <person name="Hwang C."/>
            <person name="Copeland A."/>
            <person name="Lucas S."/>
            <person name="Lapidus A."/>
            <person name="Barry K."/>
            <person name="Detter J.C."/>
            <person name="Glavina Del Rio T."/>
            <person name="Hammon N."/>
            <person name="Israni S."/>
            <person name="Dalin E."/>
            <person name="Tice H."/>
            <person name="Pitluck S."/>
            <person name="Chertkov O."/>
            <person name="Brettin T."/>
            <person name="Bruce D."/>
            <person name="Han C."/>
            <person name="Schmutz J."/>
            <person name="Larimer F."/>
            <person name="Land M.L."/>
            <person name="Hauser L."/>
            <person name="Kyrpides N."/>
            <person name="Mikhailova N."/>
            <person name="Ye Q."/>
            <person name="Zhou J."/>
            <person name="Richardson P."/>
            <person name="Fields M.W."/>
        </authorList>
    </citation>
    <scope>NUCLEOTIDE SEQUENCE [LARGE SCALE GENOMIC DNA]</scope>
    <source>
        <strain>QYMF</strain>
    </source>
</reference>
<sequence length="377" mass="41119">MERYIIKDGKKLRYGYTTGSCATAASKAAAQMLLQPGEVHEVDIDTPKGWSLKLKVEDIQRSHGAVSCAIIKDAGDDPDVTNKLAIYSKLIWRQDTKIEIHGGEGVGTVTRPGLQIPVGKPAINPIPLQMIEREVREVIGPGRGVDIVISVPKGQEVAKKTFNPKLGIQGGISILGTSGIVEPMSEEAMKDSLALELPMAKAEKIKTFVFVPGNYGRDMAREKYKIHDKNMIKISNFVGFMMDQSVIQNVERILIIGHIGKLVKVAGGIFHTHSKVADGRREILAAHLAALGASQQLVLRVLESNTTEEAVGLIQEKGFDRLFSHLADKITEKCVERTQGNIEIGTIIFSMEQGVLAHCSQAGRLLEILKSEGVKDE</sequence>
<feature type="chain" id="PRO_1000062244" description="Cobalt-precorrin-5B C(1)-methyltransferase">
    <location>
        <begin position="1"/>
        <end position="377"/>
    </location>
</feature>